<keyword id="KW-1035">Host cytoplasm</keyword>
<keyword id="KW-1048">Host nucleus</keyword>
<keyword id="KW-0964">Secreted</keyword>
<keyword id="KW-0732">Signal</keyword>
<keyword id="KW-0843">Virulence</keyword>
<accession>P0CU94</accession>
<comment type="function">
    <text evidence="2">Secreted effector that completely suppresses the host cell death induced by cell death-inducing proteins.</text>
</comment>
<comment type="subcellular location">
    <subcellularLocation>
        <location evidence="2">Secreted</location>
    </subcellularLocation>
    <subcellularLocation>
        <location evidence="2">Host nucleus</location>
    </subcellularLocation>
    <subcellularLocation>
        <location evidence="2">Host cytoplasm</location>
    </subcellularLocation>
</comment>
<comment type="domain">
    <text evidence="5">The RxLR-dEER motif acts to carry the protein into the host cell cytoplasm through binding to cell surface phosphatidylinositol-3-phosphate.</text>
</comment>
<comment type="similarity">
    <text evidence="4">Belongs to the RxLR effector family.</text>
</comment>
<dbReference type="SMR" id="P0CU94"/>
<dbReference type="GO" id="GO:0005576">
    <property type="term" value="C:extracellular region"/>
    <property type="evidence" value="ECO:0007669"/>
    <property type="project" value="UniProtKB-SubCell"/>
</dbReference>
<dbReference type="GO" id="GO:0030430">
    <property type="term" value="C:host cell cytoplasm"/>
    <property type="evidence" value="ECO:0007669"/>
    <property type="project" value="UniProtKB-SubCell"/>
</dbReference>
<dbReference type="GO" id="GO:0042025">
    <property type="term" value="C:host cell nucleus"/>
    <property type="evidence" value="ECO:0007669"/>
    <property type="project" value="UniProtKB-SubCell"/>
</dbReference>
<name>RLR7_PLAVT</name>
<organism>
    <name type="scientific">Plasmopara viticola</name>
    <name type="common">Downy mildew of grapevine</name>
    <name type="synonym">Botrytis viticola</name>
    <dbReference type="NCBI Taxonomy" id="143451"/>
    <lineage>
        <taxon>Eukaryota</taxon>
        <taxon>Sar</taxon>
        <taxon>Stramenopiles</taxon>
        <taxon>Oomycota</taxon>
        <taxon>Peronosporales</taxon>
        <taxon>Peronosporaceae</taxon>
        <taxon>Plasmopara</taxon>
    </lineage>
</organism>
<protein>
    <recommendedName>
        <fullName evidence="3">Secreted RxLR effector protein 7</fullName>
    </recommendedName>
</protein>
<proteinExistence type="evidence at transcript level"/>
<feature type="signal peptide" evidence="1">
    <location>
        <begin position="1"/>
        <end position="21"/>
    </location>
</feature>
<feature type="chain" id="PRO_0000447903" description="Secreted RxLR effector protein 7">
    <location>
        <begin position="22"/>
        <end position="127"/>
    </location>
</feature>
<feature type="short sequence motif" description="RxLR-dEER" evidence="5">
    <location>
        <begin position="48"/>
        <end position="65"/>
    </location>
</feature>
<evidence type="ECO:0000255" key="1"/>
<evidence type="ECO:0000269" key="2">
    <source>
    </source>
</evidence>
<evidence type="ECO:0000303" key="3">
    <source>
    </source>
</evidence>
<evidence type="ECO:0000305" key="4"/>
<evidence type="ECO:0000305" key="5">
    <source>
    </source>
</evidence>
<reference key="1">
    <citation type="journal article" date="2018" name="Front. Plant Sci.">
        <title>In planta functional analysis and subcellular localization of the oomycete pathogen Plasmopara viticola candidate RXLR effector repertoire.</title>
        <authorList>
            <person name="Liu Y."/>
            <person name="Lan X."/>
            <person name="Song S."/>
            <person name="Yin L."/>
            <person name="Dry I.B."/>
            <person name="Qu J."/>
            <person name="Xiang J."/>
            <person name="Lu J."/>
        </authorList>
    </citation>
    <scope>NUCLEOTIDE SEQUENCE [MRNA]</scope>
    <scope>DOMAIN</scope>
    <scope>FUNCTION</scope>
    <scope>SUBCELLULAR LOCATION</scope>
</reference>
<sequence length="127" mass="14196">MRSAYYVLTALLVVASSQVAAESGHQLQAYGHDRITDDNAAMKSLSTRFLRESRDVHGNVANEERSVYSVLASMINEGIEKMPRTAEVLKRKSRSIKDSDKVPHEAKLVNEMFHAAKAKEMMQSAEE</sequence>
<gene>
    <name evidence="3" type="primary">RXLR7</name>
</gene>